<reference key="1">
    <citation type="journal article" date="2011" name="Appl. Environ. Microbiol.">
        <title>Genomic potential of Marinobacter aquaeolei, a biogeochemical 'opportunitroph'.</title>
        <authorList>
            <person name="Singer E."/>
            <person name="Webb E.A."/>
            <person name="Nelson W.C."/>
            <person name="Heidelberg J.F."/>
            <person name="Ivanova N."/>
            <person name="Pati A."/>
            <person name="Edwards K.J."/>
        </authorList>
    </citation>
    <scope>NUCLEOTIDE SEQUENCE [LARGE SCALE GENOMIC DNA]</scope>
    <source>
        <strain>ATCC 700491 / DSM 11845 / VT8</strain>
    </source>
</reference>
<keyword id="KW-0067">ATP-binding</keyword>
<keyword id="KW-0963">Cytoplasm</keyword>
<keyword id="KW-0275">Fatty acid biosynthesis</keyword>
<keyword id="KW-0276">Fatty acid metabolism</keyword>
<keyword id="KW-0444">Lipid biosynthesis</keyword>
<keyword id="KW-0443">Lipid metabolism</keyword>
<keyword id="KW-0479">Metal-binding</keyword>
<keyword id="KW-0547">Nucleotide-binding</keyword>
<keyword id="KW-0808">Transferase</keyword>
<keyword id="KW-0862">Zinc</keyword>
<keyword id="KW-0863">Zinc-finger</keyword>
<accession>A1U0X1</accession>
<feature type="chain" id="PRO_0000359007" description="Acetyl-coenzyme A carboxylase carboxyl transferase subunit beta">
    <location>
        <begin position="1"/>
        <end position="309"/>
    </location>
</feature>
<feature type="domain" description="CoA carboxyltransferase N-terminal" evidence="2">
    <location>
        <begin position="27"/>
        <end position="296"/>
    </location>
</feature>
<feature type="zinc finger region" description="C4-type" evidence="1">
    <location>
        <begin position="31"/>
        <end position="53"/>
    </location>
</feature>
<feature type="region of interest" description="Disordered" evidence="3">
    <location>
        <begin position="288"/>
        <end position="309"/>
    </location>
</feature>
<feature type="binding site" evidence="1">
    <location>
        <position position="31"/>
    </location>
    <ligand>
        <name>Zn(2+)</name>
        <dbReference type="ChEBI" id="CHEBI:29105"/>
    </ligand>
</feature>
<feature type="binding site" evidence="1">
    <location>
        <position position="34"/>
    </location>
    <ligand>
        <name>Zn(2+)</name>
        <dbReference type="ChEBI" id="CHEBI:29105"/>
    </ligand>
</feature>
<feature type="binding site" evidence="1">
    <location>
        <position position="50"/>
    </location>
    <ligand>
        <name>Zn(2+)</name>
        <dbReference type="ChEBI" id="CHEBI:29105"/>
    </ligand>
</feature>
<feature type="binding site" evidence="1">
    <location>
        <position position="53"/>
    </location>
    <ligand>
        <name>Zn(2+)</name>
        <dbReference type="ChEBI" id="CHEBI:29105"/>
    </ligand>
</feature>
<proteinExistence type="inferred from homology"/>
<protein>
    <recommendedName>
        <fullName evidence="1">Acetyl-coenzyme A carboxylase carboxyl transferase subunit beta</fullName>
        <shortName evidence="1">ACCase subunit beta</shortName>
        <shortName evidence="1">Acetyl-CoA carboxylase carboxyltransferase subunit beta</shortName>
        <ecNumber evidence="1">2.1.3.15</ecNumber>
    </recommendedName>
</protein>
<gene>
    <name evidence="1" type="primary">accD</name>
    <name type="ordered locus">Maqu_1556</name>
</gene>
<organism>
    <name type="scientific">Marinobacter nauticus (strain ATCC 700491 / DSM 11845 / VT8)</name>
    <name type="common">Marinobacter aquaeolei</name>
    <dbReference type="NCBI Taxonomy" id="351348"/>
    <lineage>
        <taxon>Bacteria</taxon>
        <taxon>Pseudomonadati</taxon>
        <taxon>Pseudomonadota</taxon>
        <taxon>Gammaproteobacteria</taxon>
        <taxon>Pseudomonadales</taxon>
        <taxon>Marinobacteraceae</taxon>
        <taxon>Marinobacter</taxon>
    </lineage>
</organism>
<name>ACCD_MARN8</name>
<dbReference type="EC" id="2.1.3.15" evidence="1"/>
<dbReference type="EMBL" id="CP000514">
    <property type="protein sequence ID" value="ABM18640.1"/>
    <property type="molecule type" value="Genomic_DNA"/>
</dbReference>
<dbReference type="RefSeq" id="WP_011785042.1">
    <property type="nucleotide sequence ID" value="NC_008740.1"/>
</dbReference>
<dbReference type="SMR" id="A1U0X1"/>
<dbReference type="STRING" id="351348.Maqu_1556"/>
<dbReference type="KEGG" id="maq:Maqu_1556"/>
<dbReference type="eggNOG" id="COG0777">
    <property type="taxonomic scope" value="Bacteria"/>
</dbReference>
<dbReference type="HOGENOM" id="CLU_015486_1_0_6"/>
<dbReference type="OrthoDB" id="9772975at2"/>
<dbReference type="UniPathway" id="UPA00655">
    <property type="reaction ID" value="UER00711"/>
</dbReference>
<dbReference type="Proteomes" id="UP000000998">
    <property type="component" value="Chromosome"/>
</dbReference>
<dbReference type="GO" id="GO:0009329">
    <property type="term" value="C:acetate CoA-transferase complex"/>
    <property type="evidence" value="ECO:0007669"/>
    <property type="project" value="TreeGrafter"/>
</dbReference>
<dbReference type="GO" id="GO:0003989">
    <property type="term" value="F:acetyl-CoA carboxylase activity"/>
    <property type="evidence" value="ECO:0007669"/>
    <property type="project" value="InterPro"/>
</dbReference>
<dbReference type="GO" id="GO:0005524">
    <property type="term" value="F:ATP binding"/>
    <property type="evidence" value="ECO:0007669"/>
    <property type="project" value="UniProtKB-KW"/>
</dbReference>
<dbReference type="GO" id="GO:0016743">
    <property type="term" value="F:carboxyl- or carbamoyltransferase activity"/>
    <property type="evidence" value="ECO:0007669"/>
    <property type="project" value="UniProtKB-UniRule"/>
</dbReference>
<dbReference type="GO" id="GO:0008270">
    <property type="term" value="F:zinc ion binding"/>
    <property type="evidence" value="ECO:0007669"/>
    <property type="project" value="UniProtKB-UniRule"/>
</dbReference>
<dbReference type="GO" id="GO:0006633">
    <property type="term" value="P:fatty acid biosynthetic process"/>
    <property type="evidence" value="ECO:0007669"/>
    <property type="project" value="UniProtKB-KW"/>
</dbReference>
<dbReference type="GO" id="GO:2001295">
    <property type="term" value="P:malonyl-CoA biosynthetic process"/>
    <property type="evidence" value="ECO:0007669"/>
    <property type="project" value="UniProtKB-UniRule"/>
</dbReference>
<dbReference type="Gene3D" id="3.90.226.10">
    <property type="entry name" value="2-enoyl-CoA Hydratase, Chain A, domain 1"/>
    <property type="match status" value="1"/>
</dbReference>
<dbReference type="HAMAP" id="MF_01395">
    <property type="entry name" value="AcetylCoA_CT_beta"/>
    <property type="match status" value="1"/>
</dbReference>
<dbReference type="InterPro" id="IPR034733">
    <property type="entry name" value="AcCoA_carboxyl_beta"/>
</dbReference>
<dbReference type="InterPro" id="IPR000438">
    <property type="entry name" value="Acetyl_CoA_COase_Trfase_b_su"/>
</dbReference>
<dbReference type="InterPro" id="IPR029045">
    <property type="entry name" value="ClpP/crotonase-like_dom_sf"/>
</dbReference>
<dbReference type="InterPro" id="IPR011762">
    <property type="entry name" value="COA_CT_N"/>
</dbReference>
<dbReference type="InterPro" id="IPR041010">
    <property type="entry name" value="Znf-ACC"/>
</dbReference>
<dbReference type="NCBIfam" id="TIGR00515">
    <property type="entry name" value="accD"/>
    <property type="match status" value="1"/>
</dbReference>
<dbReference type="PANTHER" id="PTHR42995">
    <property type="entry name" value="ACETYL-COENZYME A CARBOXYLASE CARBOXYL TRANSFERASE SUBUNIT BETA, CHLOROPLASTIC"/>
    <property type="match status" value="1"/>
</dbReference>
<dbReference type="PANTHER" id="PTHR42995:SF5">
    <property type="entry name" value="ACETYL-COENZYME A CARBOXYLASE CARBOXYL TRANSFERASE SUBUNIT BETA, CHLOROPLASTIC"/>
    <property type="match status" value="1"/>
</dbReference>
<dbReference type="Pfam" id="PF01039">
    <property type="entry name" value="Carboxyl_trans"/>
    <property type="match status" value="1"/>
</dbReference>
<dbReference type="Pfam" id="PF17848">
    <property type="entry name" value="Zn_ribbon_ACC"/>
    <property type="match status" value="1"/>
</dbReference>
<dbReference type="PRINTS" id="PR01070">
    <property type="entry name" value="ACCCTRFRASEB"/>
</dbReference>
<dbReference type="SUPFAM" id="SSF52096">
    <property type="entry name" value="ClpP/crotonase"/>
    <property type="match status" value="1"/>
</dbReference>
<dbReference type="PROSITE" id="PS50980">
    <property type="entry name" value="COA_CT_NTER"/>
    <property type="match status" value="1"/>
</dbReference>
<evidence type="ECO:0000255" key="1">
    <source>
        <dbReference type="HAMAP-Rule" id="MF_01395"/>
    </source>
</evidence>
<evidence type="ECO:0000255" key="2">
    <source>
        <dbReference type="PROSITE-ProRule" id="PRU01136"/>
    </source>
</evidence>
<evidence type="ECO:0000256" key="3">
    <source>
        <dbReference type="SAM" id="MobiDB-lite"/>
    </source>
</evidence>
<comment type="function">
    <text evidence="1">Component of the acetyl coenzyme A carboxylase (ACC) complex. Biotin carboxylase (BC) catalyzes the carboxylation of biotin on its carrier protein (BCCP) and then the CO(2) group is transferred by the transcarboxylase to acetyl-CoA to form malonyl-CoA.</text>
</comment>
<comment type="catalytic activity">
    <reaction evidence="1">
        <text>N(6)-carboxybiotinyl-L-lysyl-[protein] + acetyl-CoA = N(6)-biotinyl-L-lysyl-[protein] + malonyl-CoA</text>
        <dbReference type="Rhea" id="RHEA:54728"/>
        <dbReference type="Rhea" id="RHEA-COMP:10505"/>
        <dbReference type="Rhea" id="RHEA-COMP:10506"/>
        <dbReference type="ChEBI" id="CHEBI:57288"/>
        <dbReference type="ChEBI" id="CHEBI:57384"/>
        <dbReference type="ChEBI" id="CHEBI:83144"/>
        <dbReference type="ChEBI" id="CHEBI:83145"/>
        <dbReference type="EC" id="2.1.3.15"/>
    </reaction>
</comment>
<comment type="cofactor">
    <cofactor evidence="1">
        <name>Zn(2+)</name>
        <dbReference type="ChEBI" id="CHEBI:29105"/>
    </cofactor>
    <text evidence="1">Binds 1 zinc ion per subunit.</text>
</comment>
<comment type="pathway">
    <text evidence="1">Lipid metabolism; malonyl-CoA biosynthesis; malonyl-CoA from acetyl-CoA: step 1/1.</text>
</comment>
<comment type="subunit">
    <text evidence="1">Acetyl-CoA carboxylase is a heterohexamer composed of biotin carboxyl carrier protein (AccB), biotin carboxylase (AccC) and two subunits each of ACCase subunit alpha (AccA) and ACCase subunit beta (AccD).</text>
</comment>
<comment type="subcellular location">
    <subcellularLocation>
        <location evidence="1">Cytoplasm</location>
    </subcellularLocation>
</comment>
<comment type="similarity">
    <text evidence="1">Belongs to the AccD/PCCB family.</text>
</comment>
<sequence length="309" mass="34404">MSNWLDKIMPSKIRSESRQRTGVPEGLWKKCPKCGAFLYKPELEKNLDVCPKCNHHLRVSARRRLDIFLDKDGREELAAHLEPSDRLKFKDSKRYKDRLAAAQKSTGEKDALIAMRGTTMGVPLVACAFEFNFLGGSMGQVVGEKFVQAANVALEHRIPLVCFSASGGARMQEAILSLMQMAKTAAVLEKLKQEGIPYISVMTDPVFGGVSASLAMLGDLNIAEPYALIGFAGPRVIEQTVREKLPEGFQRSEFLLEHGAIDMILHRHQMRERIAHLLAKFTAQEKPGTEAPIEFEVTEKPDVDEPEGQ</sequence>